<comment type="function">
    <text evidence="1">Insulin decreases blood glucose concentration. It increases cell permeability to monosaccharides, amino acids and fatty acids. It accelerates glycolysis, the pentose phosphate cycle, and glycogen synthesis in liver (By similarity).</text>
</comment>
<comment type="subunit">
    <text evidence="1">Heterodimer of a B chain and an A chain linked by two disulfide bonds.</text>
</comment>
<comment type="subcellular location">
    <subcellularLocation>
        <location evidence="1">Secreted</location>
    </subcellularLocation>
</comment>
<comment type="similarity">
    <text evidence="3">Belongs to the insulin family.</text>
</comment>
<feature type="peptide" id="PRO_0000429390" description="Insulin-2 B chain" evidence="4">
    <location>
        <begin position="1"/>
        <end position="30"/>
    </location>
</feature>
<feature type="peptide" id="PRO_0000429391" description="Insulin-2 A chain" evidence="4">
    <location>
        <begin position="31"/>
        <end position="51"/>
    </location>
</feature>
<feature type="disulfide bond" description="Interchain (between B and A chains)" evidence="2">
    <location>
        <begin position="8"/>
        <end position="37"/>
    </location>
</feature>
<feature type="disulfide bond" description="Interchain (between B and A chains)" evidence="2">
    <location>
        <begin position="20"/>
        <end position="50"/>
    </location>
</feature>
<feature type="disulfide bond" evidence="2">
    <location>
        <begin position="36"/>
        <end position="41"/>
    </location>
</feature>
<feature type="non-consecutive residues" evidence="5">
    <location>
        <begin position="30"/>
        <end position="31"/>
    </location>
</feature>
<dbReference type="SMR" id="C0HJI3"/>
<dbReference type="GO" id="GO:0005615">
    <property type="term" value="C:extracellular space"/>
    <property type="evidence" value="ECO:0007669"/>
    <property type="project" value="TreeGrafter"/>
</dbReference>
<dbReference type="GO" id="GO:0005179">
    <property type="term" value="F:hormone activity"/>
    <property type="evidence" value="ECO:0007669"/>
    <property type="project" value="UniProtKB-KW"/>
</dbReference>
<dbReference type="GO" id="GO:0006006">
    <property type="term" value="P:glucose metabolic process"/>
    <property type="evidence" value="ECO:0007669"/>
    <property type="project" value="UniProtKB-KW"/>
</dbReference>
<dbReference type="CDD" id="cd04367">
    <property type="entry name" value="IlGF_insulin_like"/>
    <property type="match status" value="1"/>
</dbReference>
<dbReference type="Gene3D" id="1.10.100.10">
    <property type="entry name" value="Insulin-like"/>
    <property type="match status" value="1"/>
</dbReference>
<dbReference type="InterPro" id="IPR004825">
    <property type="entry name" value="Insulin"/>
</dbReference>
<dbReference type="InterPro" id="IPR016179">
    <property type="entry name" value="Insulin-like"/>
</dbReference>
<dbReference type="InterPro" id="IPR036438">
    <property type="entry name" value="Insulin-like_sf"/>
</dbReference>
<dbReference type="InterPro" id="IPR022353">
    <property type="entry name" value="Insulin_CS"/>
</dbReference>
<dbReference type="InterPro" id="IPR022352">
    <property type="entry name" value="Insulin_family"/>
</dbReference>
<dbReference type="PANTHER" id="PTHR11454:SF9">
    <property type="entry name" value="INSULIN"/>
    <property type="match status" value="1"/>
</dbReference>
<dbReference type="PANTHER" id="PTHR11454">
    <property type="entry name" value="INSULIN/INSULIN GROWTH FACTOR"/>
    <property type="match status" value="1"/>
</dbReference>
<dbReference type="Pfam" id="PF00049">
    <property type="entry name" value="Insulin"/>
    <property type="match status" value="2"/>
</dbReference>
<dbReference type="PRINTS" id="PR00277">
    <property type="entry name" value="INSULIN"/>
</dbReference>
<dbReference type="PRINTS" id="PR00276">
    <property type="entry name" value="INSULINFAMLY"/>
</dbReference>
<dbReference type="SMART" id="SM00078">
    <property type="entry name" value="IlGF"/>
    <property type="match status" value="1"/>
</dbReference>
<dbReference type="SUPFAM" id="SSF56994">
    <property type="entry name" value="Insulin-like"/>
    <property type="match status" value="1"/>
</dbReference>
<dbReference type="PROSITE" id="PS00262">
    <property type="entry name" value="INSULIN"/>
    <property type="match status" value="1"/>
</dbReference>
<sequence>AAPPQHLCGSHLVDALYLVCGERGFFYNPKGIVEQCCHKPCNIFDLQNYCN</sequence>
<keyword id="KW-0119">Carbohydrate metabolism</keyword>
<keyword id="KW-0903">Direct protein sequencing</keyword>
<keyword id="KW-1015">Disulfide bond</keyword>
<keyword id="KW-0313">Glucose metabolism</keyword>
<keyword id="KW-0372">Hormone</keyword>
<keyword id="KW-0964">Secreted</keyword>
<evidence type="ECO:0000250" key="1"/>
<evidence type="ECO:0000250" key="2">
    <source>
        <dbReference type="UniProtKB" id="P01339"/>
    </source>
</evidence>
<evidence type="ECO:0000255" key="3"/>
<evidence type="ECO:0000269" key="4">
    <source ref="1"/>
</evidence>
<evidence type="ECO:0000303" key="5">
    <source ref="1"/>
</evidence>
<evidence type="ECO:0000305" key="6"/>
<accession>C0HJI3</accession>
<proteinExistence type="evidence at protein level"/>
<reference evidence="6" key="1">
    <citation type="submission" date="2014-04" db="UniProtKB">
        <title>Primary structures of two insulins from Bonito (Katsuwonus pelamis).</title>
        <authorList>
            <person name="Andoh T."/>
        </authorList>
    </citation>
    <scope>PROTEIN SEQUENCE</scope>
</reference>
<name>INS2_KATPE</name>
<organism>
    <name type="scientific">Katsuwonus pelamis</name>
    <name type="common">Skipjack tuna</name>
    <name type="synonym">Scomber pelamis</name>
    <dbReference type="NCBI Taxonomy" id="8226"/>
    <lineage>
        <taxon>Eukaryota</taxon>
        <taxon>Metazoa</taxon>
        <taxon>Chordata</taxon>
        <taxon>Craniata</taxon>
        <taxon>Vertebrata</taxon>
        <taxon>Euteleostomi</taxon>
        <taxon>Actinopterygii</taxon>
        <taxon>Neopterygii</taxon>
        <taxon>Teleostei</taxon>
        <taxon>Neoteleostei</taxon>
        <taxon>Acanthomorphata</taxon>
        <taxon>Pelagiaria</taxon>
        <taxon>Scombriformes</taxon>
        <taxon>Scombridae</taxon>
        <taxon>Katsuwonus</taxon>
    </lineage>
</organism>
<protein>
    <recommendedName>
        <fullName evidence="5">Insulin-2</fullName>
    </recommendedName>
    <component>
        <recommendedName>
            <fullName evidence="5">Insulin-2 B chain</fullName>
        </recommendedName>
    </component>
    <component>
        <recommendedName>
            <fullName evidence="5">Insulin-2 A chain</fullName>
        </recommendedName>
    </component>
</protein>